<keyword id="KW-0963">Cytoplasm</keyword>
<keyword id="KW-0342">GTP-binding</keyword>
<keyword id="KW-0460">Magnesium</keyword>
<keyword id="KW-0479">Metal-binding</keyword>
<keyword id="KW-0501">Molybdenum cofactor biosynthesis</keyword>
<keyword id="KW-0547">Nucleotide-binding</keyword>
<keyword id="KW-0808">Transferase</keyword>
<reference key="1">
    <citation type="submission" date="2007-11" db="EMBL/GenBank/DDBJ databases">
        <title>Complete sequence of chromosome of Shewanella baltica OS195.</title>
        <authorList>
            <consortium name="US DOE Joint Genome Institute"/>
            <person name="Copeland A."/>
            <person name="Lucas S."/>
            <person name="Lapidus A."/>
            <person name="Barry K."/>
            <person name="Glavina del Rio T."/>
            <person name="Dalin E."/>
            <person name="Tice H."/>
            <person name="Pitluck S."/>
            <person name="Chain P."/>
            <person name="Malfatti S."/>
            <person name="Shin M."/>
            <person name="Vergez L."/>
            <person name="Schmutz J."/>
            <person name="Larimer F."/>
            <person name="Land M."/>
            <person name="Hauser L."/>
            <person name="Kyrpides N."/>
            <person name="Kim E."/>
            <person name="Brettar I."/>
            <person name="Rodrigues J."/>
            <person name="Konstantinidis K."/>
            <person name="Klappenbach J."/>
            <person name="Hofle M."/>
            <person name="Tiedje J."/>
            <person name="Richardson P."/>
        </authorList>
    </citation>
    <scope>NUCLEOTIDE SEQUENCE [LARGE SCALE GENOMIC DNA]</scope>
    <source>
        <strain>OS195</strain>
    </source>
</reference>
<accession>A9KW43</accession>
<gene>
    <name evidence="1" type="primary">mobA</name>
    <name type="ordered locus">Sbal195_4460</name>
</gene>
<organism>
    <name type="scientific">Shewanella baltica (strain OS195)</name>
    <dbReference type="NCBI Taxonomy" id="399599"/>
    <lineage>
        <taxon>Bacteria</taxon>
        <taxon>Pseudomonadati</taxon>
        <taxon>Pseudomonadota</taxon>
        <taxon>Gammaproteobacteria</taxon>
        <taxon>Alteromonadales</taxon>
        <taxon>Shewanellaceae</taxon>
        <taxon>Shewanella</taxon>
    </lineage>
</organism>
<comment type="function">
    <text evidence="1">Transfers a GMP moiety from GTP to Mo-molybdopterin (Mo-MPT) cofactor (Moco or molybdenum cofactor) to form Mo-molybdopterin guanine dinucleotide (Mo-MGD) cofactor.</text>
</comment>
<comment type="catalytic activity">
    <reaction evidence="1">
        <text>Mo-molybdopterin + GTP + H(+) = Mo-molybdopterin guanine dinucleotide + diphosphate</text>
        <dbReference type="Rhea" id="RHEA:34243"/>
        <dbReference type="ChEBI" id="CHEBI:15378"/>
        <dbReference type="ChEBI" id="CHEBI:33019"/>
        <dbReference type="ChEBI" id="CHEBI:37565"/>
        <dbReference type="ChEBI" id="CHEBI:71302"/>
        <dbReference type="ChEBI" id="CHEBI:71310"/>
        <dbReference type="EC" id="2.7.7.77"/>
    </reaction>
</comment>
<comment type="cofactor">
    <cofactor evidence="1">
        <name>Mg(2+)</name>
        <dbReference type="ChEBI" id="CHEBI:18420"/>
    </cofactor>
</comment>
<comment type="subunit">
    <text evidence="1">Monomer.</text>
</comment>
<comment type="subcellular location">
    <subcellularLocation>
        <location evidence="1">Cytoplasm</location>
    </subcellularLocation>
</comment>
<comment type="domain">
    <text evidence="1">The N-terminal domain determines nucleotide recognition and specific binding, while the C-terminal domain determines the specific binding to the target protein.</text>
</comment>
<comment type="similarity">
    <text evidence="1">Belongs to the MobA family.</text>
</comment>
<proteinExistence type="inferred from homology"/>
<name>MOBA_SHEB9</name>
<evidence type="ECO:0000255" key="1">
    <source>
        <dbReference type="HAMAP-Rule" id="MF_00316"/>
    </source>
</evidence>
<dbReference type="EC" id="2.7.7.77" evidence="1"/>
<dbReference type="EMBL" id="CP000891">
    <property type="protein sequence ID" value="ABX51617.1"/>
    <property type="molecule type" value="Genomic_DNA"/>
</dbReference>
<dbReference type="RefSeq" id="WP_006084724.1">
    <property type="nucleotide sequence ID" value="NC_009997.1"/>
</dbReference>
<dbReference type="SMR" id="A9KW43"/>
<dbReference type="GeneID" id="11774415"/>
<dbReference type="KEGG" id="sbn:Sbal195_4460"/>
<dbReference type="HOGENOM" id="CLU_055597_5_1_6"/>
<dbReference type="Proteomes" id="UP000000770">
    <property type="component" value="Chromosome"/>
</dbReference>
<dbReference type="GO" id="GO:0005737">
    <property type="term" value="C:cytoplasm"/>
    <property type="evidence" value="ECO:0007669"/>
    <property type="project" value="UniProtKB-SubCell"/>
</dbReference>
<dbReference type="GO" id="GO:0005525">
    <property type="term" value="F:GTP binding"/>
    <property type="evidence" value="ECO:0007669"/>
    <property type="project" value="UniProtKB-UniRule"/>
</dbReference>
<dbReference type="GO" id="GO:0046872">
    <property type="term" value="F:metal ion binding"/>
    <property type="evidence" value="ECO:0007669"/>
    <property type="project" value="UniProtKB-KW"/>
</dbReference>
<dbReference type="GO" id="GO:0061603">
    <property type="term" value="F:molybdenum cofactor guanylyltransferase activity"/>
    <property type="evidence" value="ECO:0007669"/>
    <property type="project" value="UniProtKB-EC"/>
</dbReference>
<dbReference type="GO" id="GO:1902758">
    <property type="term" value="P:bis(molybdopterin guanine dinucleotide)molybdenum biosynthetic process"/>
    <property type="evidence" value="ECO:0007669"/>
    <property type="project" value="TreeGrafter"/>
</dbReference>
<dbReference type="CDD" id="cd02503">
    <property type="entry name" value="MobA"/>
    <property type="match status" value="1"/>
</dbReference>
<dbReference type="Gene3D" id="3.90.550.10">
    <property type="entry name" value="Spore Coat Polysaccharide Biosynthesis Protein SpsA, Chain A"/>
    <property type="match status" value="1"/>
</dbReference>
<dbReference type="HAMAP" id="MF_00316">
    <property type="entry name" value="MobA"/>
    <property type="match status" value="1"/>
</dbReference>
<dbReference type="InterPro" id="IPR025877">
    <property type="entry name" value="MobA-like_NTP_Trfase"/>
</dbReference>
<dbReference type="InterPro" id="IPR013482">
    <property type="entry name" value="Molybde_CF_guanTrfase"/>
</dbReference>
<dbReference type="InterPro" id="IPR029044">
    <property type="entry name" value="Nucleotide-diphossugar_trans"/>
</dbReference>
<dbReference type="NCBIfam" id="TIGR02665">
    <property type="entry name" value="molyb_mobA"/>
    <property type="match status" value="1"/>
</dbReference>
<dbReference type="PANTHER" id="PTHR19136">
    <property type="entry name" value="MOLYBDENUM COFACTOR GUANYLYLTRANSFERASE"/>
    <property type="match status" value="1"/>
</dbReference>
<dbReference type="PANTHER" id="PTHR19136:SF81">
    <property type="entry name" value="MOLYBDENUM COFACTOR GUANYLYLTRANSFERASE"/>
    <property type="match status" value="1"/>
</dbReference>
<dbReference type="Pfam" id="PF12804">
    <property type="entry name" value="NTP_transf_3"/>
    <property type="match status" value="1"/>
</dbReference>
<dbReference type="SUPFAM" id="SSF53448">
    <property type="entry name" value="Nucleotide-diphospho-sugar transferases"/>
    <property type="match status" value="1"/>
</dbReference>
<sequence>MSSQIDAVILAGGMARRMGGDDKGLVELNGEAMIKHTIDRIKPQVKEILINANRNQTRYAEFGFKVISDEHTGFLGPLAGMITAMGQTDADYLLVVPCDCPLLPTDLVPRMLAAIKAEDAEIAVASDGEYEQPVVLLLKPSLRDSMKAFLEAGERKVDFWYAKHHFVVESFSDQPNAFVNVNTPEQKQRLAMEITK</sequence>
<feature type="chain" id="PRO_1000079112" description="Molybdenum cofactor guanylyltransferase">
    <location>
        <begin position="1"/>
        <end position="196"/>
    </location>
</feature>
<feature type="binding site" evidence="1">
    <location>
        <begin position="10"/>
        <end position="12"/>
    </location>
    <ligand>
        <name>GTP</name>
        <dbReference type="ChEBI" id="CHEBI:37565"/>
    </ligand>
</feature>
<feature type="binding site" evidence="1">
    <location>
        <position position="23"/>
    </location>
    <ligand>
        <name>GTP</name>
        <dbReference type="ChEBI" id="CHEBI:37565"/>
    </ligand>
</feature>
<feature type="binding site" evidence="1">
    <location>
        <position position="51"/>
    </location>
    <ligand>
        <name>GTP</name>
        <dbReference type="ChEBI" id="CHEBI:37565"/>
    </ligand>
</feature>
<feature type="binding site" evidence="1">
    <location>
        <position position="69"/>
    </location>
    <ligand>
        <name>GTP</name>
        <dbReference type="ChEBI" id="CHEBI:37565"/>
    </ligand>
</feature>
<feature type="binding site" evidence="1">
    <location>
        <position position="99"/>
    </location>
    <ligand>
        <name>GTP</name>
        <dbReference type="ChEBI" id="CHEBI:37565"/>
    </ligand>
</feature>
<feature type="binding site" evidence="1">
    <location>
        <position position="99"/>
    </location>
    <ligand>
        <name>Mg(2+)</name>
        <dbReference type="ChEBI" id="CHEBI:18420"/>
    </ligand>
</feature>
<protein>
    <recommendedName>
        <fullName evidence="1">Molybdenum cofactor guanylyltransferase</fullName>
        <shortName evidence="1">MoCo guanylyltransferase</shortName>
        <ecNumber evidence="1">2.7.7.77</ecNumber>
    </recommendedName>
    <alternativeName>
        <fullName evidence="1">GTP:molybdopterin guanylyltransferase</fullName>
    </alternativeName>
    <alternativeName>
        <fullName evidence="1">Mo-MPT guanylyltransferase</fullName>
    </alternativeName>
    <alternativeName>
        <fullName evidence="1">Molybdopterin guanylyltransferase</fullName>
    </alternativeName>
    <alternativeName>
        <fullName evidence="1">Molybdopterin-guanine dinucleotide synthase</fullName>
        <shortName evidence="1">MGD synthase</shortName>
    </alternativeName>
</protein>